<feature type="chain" id="PRO_0000351620" description="Transcriptional regulator LsrR">
    <location>
        <begin position="1"/>
        <end position="319"/>
    </location>
</feature>
<feature type="DNA-binding region" description="H-T-H motif" evidence="2">
    <location>
        <begin position="32"/>
        <end position="55"/>
    </location>
</feature>
<name>LSRR_SALPA</name>
<sequence length="319" mass="34450">MSDNTLVSDYGMCEEEQVARIAWFYYHDGLTQSEISERLGLTRLKVSRLLEKGHQSGIIRVQINSRFEGCLEYENALRNHFALQNIRVLPALPDADIGLRLGIGAAHMLMESLRPQQLLAVGFGEATMTTLKRLSGFISAQQIRLVTLSGGVGPYMTGIGQLDAACSVSIMPAPLRASSQEIACTLRNENSVRDVMLTAQAADAAIVGIGAINQKDQASILKSGYITQGEQLMIGRKGAVGDILGYFFDAHGEIIPDIKIHNELIGLKLNSLSTIPTVIGVAGGEQKAEAIIAAMRGNYINALVTDQKTAGKIIQLIEK</sequence>
<comment type="function">
    <text evidence="1">Transcriptional regulator that represses the expression of the lsr operon in the absence of the quorum-sensing signaling molecule autoinducer 2 (AI-2) (By similarity). It also represses the expression of the lsrRK operon (By similarity). Acts by binding to the intergenic region between the lsr operon and lsrR (By similarity). In the presence of phosphorylated autoinducer-2 (phospho-AI-2), LsrR is inactivated, leading to the transcription of the genes (By similarity).</text>
</comment>
<comment type="activity regulation">
    <text evidence="1">Inactivated by phosphorylated autoinducer-2 (phospho-AI-2) (By similarity). Phospho-AI-2 acts by binding to LsrR, which is then unable to bind to the promoter regions, allowing the transcription of the target genes (By similarity).</text>
</comment>
<comment type="subcellular location">
    <subcellularLocation>
        <location evidence="2">Cytoplasm</location>
    </subcellularLocation>
</comment>
<comment type="similarity">
    <text evidence="2">Belongs to the SorC transcriptional regulatory family.</text>
</comment>
<accession>Q5PJE8</accession>
<organism>
    <name type="scientific">Salmonella paratyphi A (strain ATCC 9150 / SARB42)</name>
    <dbReference type="NCBI Taxonomy" id="295319"/>
    <lineage>
        <taxon>Bacteria</taxon>
        <taxon>Pseudomonadati</taxon>
        <taxon>Pseudomonadota</taxon>
        <taxon>Gammaproteobacteria</taxon>
        <taxon>Enterobacterales</taxon>
        <taxon>Enterobacteriaceae</taxon>
        <taxon>Salmonella</taxon>
    </lineage>
</organism>
<gene>
    <name type="primary">lsrR</name>
    <name type="ordered locus">SPA3916</name>
</gene>
<reference key="1">
    <citation type="journal article" date="2004" name="Nat. Genet.">
        <title>Comparison of genome degradation in Paratyphi A and Typhi, human-restricted serovars of Salmonella enterica that cause typhoid.</title>
        <authorList>
            <person name="McClelland M."/>
            <person name="Sanderson K.E."/>
            <person name="Clifton S.W."/>
            <person name="Latreille P."/>
            <person name="Porwollik S."/>
            <person name="Sabo A."/>
            <person name="Meyer R."/>
            <person name="Bieri T."/>
            <person name="Ozersky P."/>
            <person name="McLellan M."/>
            <person name="Harkins C.R."/>
            <person name="Wang C."/>
            <person name="Nguyen C."/>
            <person name="Berghoff A."/>
            <person name="Elliott G."/>
            <person name="Kohlberg S."/>
            <person name="Strong C."/>
            <person name="Du F."/>
            <person name="Carter J."/>
            <person name="Kremizki C."/>
            <person name="Layman D."/>
            <person name="Leonard S."/>
            <person name="Sun H."/>
            <person name="Fulton L."/>
            <person name="Nash W."/>
            <person name="Miner T."/>
            <person name="Minx P."/>
            <person name="Delehaunty K."/>
            <person name="Fronick C."/>
            <person name="Magrini V."/>
            <person name="Nhan M."/>
            <person name="Warren W."/>
            <person name="Florea L."/>
            <person name="Spieth J."/>
            <person name="Wilson R.K."/>
        </authorList>
    </citation>
    <scope>NUCLEOTIDE SEQUENCE [LARGE SCALE GENOMIC DNA]</scope>
    <source>
        <strain>ATCC 9150 / SARB42</strain>
    </source>
</reference>
<keyword id="KW-0963">Cytoplasm</keyword>
<keyword id="KW-0238">DNA-binding</keyword>
<keyword id="KW-0678">Repressor</keyword>
<keyword id="KW-0804">Transcription</keyword>
<keyword id="KW-0805">Transcription regulation</keyword>
<proteinExistence type="inferred from homology"/>
<dbReference type="EMBL" id="CP000026">
    <property type="protein sequence ID" value="AAV79681.1"/>
    <property type="molecule type" value="Genomic_DNA"/>
</dbReference>
<dbReference type="RefSeq" id="WP_001283049.1">
    <property type="nucleotide sequence ID" value="NC_006511.1"/>
</dbReference>
<dbReference type="SMR" id="Q5PJE8"/>
<dbReference type="KEGG" id="spt:SPA3916"/>
<dbReference type="HOGENOM" id="CLU_054506_0_1_6"/>
<dbReference type="Proteomes" id="UP000008185">
    <property type="component" value="Chromosome"/>
</dbReference>
<dbReference type="GO" id="GO:0005737">
    <property type="term" value="C:cytoplasm"/>
    <property type="evidence" value="ECO:0007669"/>
    <property type="project" value="UniProtKB-SubCell"/>
</dbReference>
<dbReference type="GO" id="GO:0030246">
    <property type="term" value="F:carbohydrate binding"/>
    <property type="evidence" value="ECO:0007669"/>
    <property type="project" value="InterPro"/>
</dbReference>
<dbReference type="GO" id="GO:0003677">
    <property type="term" value="F:DNA binding"/>
    <property type="evidence" value="ECO:0007669"/>
    <property type="project" value="UniProtKB-KW"/>
</dbReference>
<dbReference type="FunFam" id="1.10.10.10:FF:000195">
    <property type="entry name" value="LsrR family transcriptional regulator"/>
    <property type="match status" value="1"/>
</dbReference>
<dbReference type="Gene3D" id="3.40.50.1360">
    <property type="match status" value="1"/>
</dbReference>
<dbReference type="Gene3D" id="1.10.10.10">
    <property type="entry name" value="Winged helix-like DNA-binding domain superfamily/Winged helix DNA-binding domain"/>
    <property type="match status" value="1"/>
</dbReference>
<dbReference type="InterPro" id="IPR037171">
    <property type="entry name" value="NagB/RpiA_transferase-like"/>
</dbReference>
<dbReference type="InterPro" id="IPR051054">
    <property type="entry name" value="SorC_transcr_regulators"/>
</dbReference>
<dbReference type="InterPro" id="IPR007324">
    <property type="entry name" value="Sugar-bd_dom_put"/>
</dbReference>
<dbReference type="InterPro" id="IPR036388">
    <property type="entry name" value="WH-like_DNA-bd_sf"/>
</dbReference>
<dbReference type="NCBIfam" id="NF011947">
    <property type="entry name" value="PRK15418.1"/>
    <property type="match status" value="1"/>
</dbReference>
<dbReference type="PANTHER" id="PTHR34294:SF1">
    <property type="entry name" value="TRANSCRIPTIONAL REGULATOR LSRR"/>
    <property type="match status" value="1"/>
</dbReference>
<dbReference type="PANTHER" id="PTHR34294">
    <property type="entry name" value="TRANSCRIPTIONAL REGULATOR-RELATED"/>
    <property type="match status" value="1"/>
</dbReference>
<dbReference type="Pfam" id="PF04198">
    <property type="entry name" value="Sugar-bind"/>
    <property type="match status" value="1"/>
</dbReference>
<dbReference type="SUPFAM" id="SSF100950">
    <property type="entry name" value="NagB/RpiA/CoA transferase-like"/>
    <property type="match status" value="1"/>
</dbReference>
<protein>
    <recommendedName>
        <fullName evidence="1">Transcriptional regulator LsrR</fullName>
    </recommendedName>
</protein>
<evidence type="ECO:0000250" key="1">
    <source>
        <dbReference type="UniProtKB" id="Q8ZKQ5"/>
    </source>
</evidence>
<evidence type="ECO:0000305" key="2"/>